<sequence>MKTFVAKPAEVKRDWYIVDAEGKTLGRMAAEIAARLRGKHKPEYTPHVDCGDYIVVINAEKIAVTGNKRTDKMYHHVTGYVGNLKSTNFETLVGSKPTRPVEFAIKGMLPRGPLGRAMLKKLKVYAGAEHPHAAQQPKELDL</sequence>
<reference key="1">
    <citation type="journal article" date="2006" name="PLoS Biol.">
        <title>The genome of deep-sea vent chemolithoautotroph Thiomicrospira crunogena XCL-2.</title>
        <authorList>
            <person name="Scott K.M."/>
            <person name="Sievert S.M."/>
            <person name="Abril F.N."/>
            <person name="Ball L.A."/>
            <person name="Barrett C.J."/>
            <person name="Blake R.A."/>
            <person name="Boller A.J."/>
            <person name="Chain P.S.G."/>
            <person name="Clark J.A."/>
            <person name="Davis C.R."/>
            <person name="Detter C."/>
            <person name="Do K.F."/>
            <person name="Dobrinski K.P."/>
            <person name="Faza B.I."/>
            <person name="Fitzpatrick K.A."/>
            <person name="Freyermuth S.K."/>
            <person name="Harmer T.L."/>
            <person name="Hauser L.J."/>
            <person name="Huegler M."/>
            <person name="Kerfeld C.A."/>
            <person name="Klotz M.G."/>
            <person name="Kong W.W."/>
            <person name="Land M."/>
            <person name="Lapidus A."/>
            <person name="Larimer F.W."/>
            <person name="Longo D.L."/>
            <person name="Lucas S."/>
            <person name="Malfatti S.A."/>
            <person name="Massey S.E."/>
            <person name="Martin D.D."/>
            <person name="McCuddin Z."/>
            <person name="Meyer F."/>
            <person name="Moore J.L."/>
            <person name="Ocampo L.H. Jr."/>
            <person name="Paul J.H."/>
            <person name="Paulsen I.T."/>
            <person name="Reep D.K."/>
            <person name="Ren Q."/>
            <person name="Ross R.L."/>
            <person name="Sato P.Y."/>
            <person name="Thomas P."/>
            <person name="Tinkham L.E."/>
            <person name="Zeruth G.T."/>
        </authorList>
    </citation>
    <scope>NUCLEOTIDE SEQUENCE [LARGE SCALE GENOMIC DNA]</scope>
    <source>
        <strain>DSM 25203 / XCL-2</strain>
    </source>
</reference>
<organism>
    <name type="scientific">Hydrogenovibrio crunogenus (strain DSM 25203 / XCL-2)</name>
    <name type="common">Thiomicrospira crunogena</name>
    <dbReference type="NCBI Taxonomy" id="317025"/>
    <lineage>
        <taxon>Bacteria</taxon>
        <taxon>Pseudomonadati</taxon>
        <taxon>Pseudomonadota</taxon>
        <taxon>Gammaproteobacteria</taxon>
        <taxon>Thiotrichales</taxon>
        <taxon>Piscirickettsiaceae</taxon>
        <taxon>Hydrogenovibrio</taxon>
    </lineage>
</organism>
<dbReference type="EMBL" id="CP000109">
    <property type="protein sequence ID" value="ABB41057.1"/>
    <property type="molecule type" value="Genomic_DNA"/>
</dbReference>
<dbReference type="SMR" id="Q31IG6"/>
<dbReference type="STRING" id="317025.Tcr_0461"/>
<dbReference type="KEGG" id="tcx:Tcr_0461"/>
<dbReference type="eggNOG" id="COG0102">
    <property type="taxonomic scope" value="Bacteria"/>
</dbReference>
<dbReference type="HOGENOM" id="CLU_082184_2_2_6"/>
<dbReference type="OrthoDB" id="9801330at2"/>
<dbReference type="GO" id="GO:0022625">
    <property type="term" value="C:cytosolic large ribosomal subunit"/>
    <property type="evidence" value="ECO:0007669"/>
    <property type="project" value="TreeGrafter"/>
</dbReference>
<dbReference type="GO" id="GO:0003729">
    <property type="term" value="F:mRNA binding"/>
    <property type="evidence" value="ECO:0007669"/>
    <property type="project" value="TreeGrafter"/>
</dbReference>
<dbReference type="GO" id="GO:0003735">
    <property type="term" value="F:structural constituent of ribosome"/>
    <property type="evidence" value="ECO:0007669"/>
    <property type="project" value="InterPro"/>
</dbReference>
<dbReference type="GO" id="GO:0017148">
    <property type="term" value="P:negative regulation of translation"/>
    <property type="evidence" value="ECO:0007669"/>
    <property type="project" value="TreeGrafter"/>
</dbReference>
<dbReference type="GO" id="GO:0006412">
    <property type="term" value="P:translation"/>
    <property type="evidence" value="ECO:0007669"/>
    <property type="project" value="UniProtKB-UniRule"/>
</dbReference>
<dbReference type="CDD" id="cd00392">
    <property type="entry name" value="Ribosomal_L13"/>
    <property type="match status" value="1"/>
</dbReference>
<dbReference type="FunFam" id="3.90.1180.10:FF:000001">
    <property type="entry name" value="50S ribosomal protein L13"/>
    <property type="match status" value="1"/>
</dbReference>
<dbReference type="Gene3D" id="3.90.1180.10">
    <property type="entry name" value="Ribosomal protein L13"/>
    <property type="match status" value="1"/>
</dbReference>
<dbReference type="HAMAP" id="MF_01366">
    <property type="entry name" value="Ribosomal_uL13"/>
    <property type="match status" value="1"/>
</dbReference>
<dbReference type="InterPro" id="IPR005822">
    <property type="entry name" value="Ribosomal_uL13"/>
</dbReference>
<dbReference type="InterPro" id="IPR005823">
    <property type="entry name" value="Ribosomal_uL13_bac-type"/>
</dbReference>
<dbReference type="InterPro" id="IPR023563">
    <property type="entry name" value="Ribosomal_uL13_CS"/>
</dbReference>
<dbReference type="InterPro" id="IPR036899">
    <property type="entry name" value="Ribosomal_uL13_sf"/>
</dbReference>
<dbReference type="NCBIfam" id="TIGR01066">
    <property type="entry name" value="rplM_bact"/>
    <property type="match status" value="1"/>
</dbReference>
<dbReference type="PANTHER" id="PTHR11545:SF2">
    <property type="entry name" value="LARGE RIBOSOMAL SUBUNIT PROTEIN UL13M"/>
    <property type="match status" value="1"/>
</dbReference>
<dbReference type="PANTHER" id="PTHR11545">
    <property type="entry name" value="RIBOSOMAL PROTEIN L13"/>
    <property type="match status" value="1"/>
</dbReference>
<dbReference type="Pfam" id="PF00572">
    <property type="entry name" value="Ribosomal_L13"/>
    <property type="match status" value="1"/>
</dbReference>
<dbReference type="PIRSF" id="PIRSF002181">
    <property type="entry name" value="Ribosomal_L13"/>
    <property type="match status" value="1"/>
</dbReference>
<dbReference type="SUPFAM" id="SSF52161">
    <property type="entry name" value="Ribosomal protein L13"/>
    <property type="match status" value="1"/>
</dbReference>
<dbReference type="PROSITE" id="PS00783">
    <property type="entry name" value="RIBOSOMAL_L13"/>
    <property type="match status" value="1"/>
</dbReference>
<feature type="chain" id="PRO_0000261818" description="Large ribosomal subunit protein uL13">
    <location>
        <begin position="1"/>
        <end position="142"/>
    </location>
</feature>
<accession>Q31IG6</accession>
<protein>
    <recommendedName>
        <fullName evidence="1">Large ribosomal subunit protein uL13</fullName>
    </recommendedName>
    <alternativeName>
        <fullName evidence="2">50S ribosomal protein L13</fullName>
    </alternativeName>
</protein>
<gene>
    <name evidence="1" type="primary">rplM</name>
    <name type="ordered locus">Tcr_0461</name>
</gene>
<name>RL13_HYDCU</name>
<evidence type="ECO:0000255" key="1">
    <source>
        <dbReference type="HAMAP-Rule" id="MF_01366"/>
    </source>
</evidence>
<evidence type="ECO:0000305" key="2"/>
<keyword id="KW-0687">Ribonucleoprotein</keyword>
<keyword id="KW-0689">Ribosomal protein</keyword>
<proteinExistence type="inferred from homology"/>
<comment type="function">
    <text evidence="1">This protein is one of the early assembly proteins of the 50S ribosomal subunit, although it is not seen to bind rRNA by itself. It is important during the early stages of 50S assembly.</text>
</comment>
<comment type="subunit">
    <text evidence="1">Part of the 50S ribosomal subunit.</text>
</comment>
<comment type="similarity">
    <text evidence="1">Belongs to the universal ribosomal protein uL13 family.</text>
</comment>